<comment type="function">
    <text evidence="1">Usually encoded in the trnK tRNA gene intron. Probably assists in splicing its own and other chloroplast group II introns.</text>
</comment>
<comment type="subcellular location">
    <subcellularLocation>
        <location>Plastid</location>
        <location>Chloroplast</location>
    </subcellularLocation>
</comment>
<comment type="similarity">
    <text evidence="1">Belongs to the intron maturase 2 family. MatK subfamily.</text>
</comment>
<reference key="1">
    <citation type="journal article" date="2003" name="Taxon">
        <title>Phylogenetic relationships in Asphodelaceae (subfamily Alooideae) inferred from chloroplast DNA sequences (rbcL, matK) and from genomic fingerprinting (ISSR).</title>
        <authorList>
            <person name="Treutlein J."/>
            <person name="Smith G.F."/>
            <person name="van Wyk B.-E."/>
            <person name="Wink M."/>
        </authorList>
    </citation>
    <scope>NUCLEOTIDE SEQUENCE [GENOMIC DNA]</scope>
</reference>
<protein>
    <recommendedName>
        <fullName evidence="1">Maturase K</fullName>
    </recommendedName>
    <alternativeName>
        <fullName evidence="1">Intron maturase</fullName>
    </alternativeName>
</protein>
<accession>Q7YJH1</accession>
<name>MATK_ASPLU</name>
<geneLocation type="chloroplast"/>
<organism>
    <name type="scientific">Asphodeline lutea</name>
    <name type="common">King's spear</name>
    <dbReference type="NCBI Taxonomy" id="49696"/>
    <lineage>
        <taxon>Eukaryota</taxon>
        <taxon>Viridiplantae</taxon>
        <taxon>Streptophyta</taxon>
        <taxon>Embryophyta</taxon>
        <taxon>Tracheophyta</taxon>
        <taxon>Spermatophyta</taxon>
        <taxon>Magnoliopsida</taxon>
        <taxon>Liliopsida</taxon>
        <taxon>Asparagales</taxon>
        <taxon>Asphodelaceae</taxon>
        <taxon>Asphodeloideae</taxon>
        <taxon>Asphodeline</taxon>
    </lineage>
</organism>
<proteinExistence type="inferred from homology"/>
<keyword id="KW-0150">Chloroplast</keyword>
<keyword id="KW-0507">mRNA processing</keyword>
<keyword id="KW-0934">Plastid</keyword>
<keyword id="KW-0694">RNA-binding</keyword>
<keyword id="KW-0819">tRNA processing</keyword>
<feature type="chain" id="PRO_0000143261" description="Maturase K">
    <location>
        <begin position="1"/>
        <end position="523"/>
    </location>
</feature>
<gene>
    <name evidence="1" type="primary">matK</name>
</gene>
<evidence type="ECO:0000255" key="1">
    <source>
        <dbReference type="HAMAP-Rule" id="MF_01390"/>
    </source>
</evidence>
<sequence>MEELQGYLEKDRSGQQHFLYPLLFQEYIYALAHDHGLNSSIFYEPVEIFGYDNKSSLALVKRLITRIYQQNFLISSVNDSNQNRFLEHNRFFYSQFYSQIISESVAIYVEIPFSRRLVSFFXEKEIPKYHNLRSIHSIFPFLEDKLSHLNYVSEILIPXPXHIGILGQILQCQIQDVPFLHLLRFFLDEYHNWNSLFITQNKSIYVFSKENKRLFRLLYNSYVFECEFFLLFFRKQSYYLRLTSSEIFLERTHFYRKIEQLRIELEHFVVVCRNYFHRTLWFLKNPFMHYVRYQRKAILASRGTHFLMKKWKYYFVNFWQYYFHFWSRPYRININHLSNYSFYFLGYFSSLLKNSLAVRNQMLENSFLIDTITKKFDTRVPVILLIGSLSKAKFCTVSGHPISKPIWADLSDSDIIDRFGRICRNLSHYHSGSSKKQDLYRIKYILRLSCARTLARKHKSTVRTFLRRLGSGLLEEFFTEEEQVLSLIFSKTTPFTLHGXHRARIWYLDIIRINDLVNHSXLS</sequence>
<dbReference type="EMBL" id="AJ511416">
    <property type="protein sequence ID" value="CAD54560.1"/>
    <property type="molecule type" value="Genomic_DNA"/>
</dbReference>
<dbReference type="GO" id="GO:0009507">
    <property type="term" value="C:chloroplast"/>
    <property type="evidence" value="ECO:0007669"/>
    <property type="project" value="UniProtKB-SubCell"/>
</dbReference>
<dbReference type="GO" id="GO:0003723">
    <property type="term" value="F:RNA binding"/>
    <property type="evidence" value="ECO:0007669"/>
    <property type="project" value="UniProtKB-KW"/>
</dbReference>
<dbReference type="GO" id="GO:0006397">
    <property type="term" value="P:mRNA processing"/>
    <property type="evidence" value="ECO:0007669"/>
    <property type="project" value="UniProtKB-KW"/>
</dbReference>
<dbReference type="GO" id="GO:0008380">
    <property type="term" value="P:RNA splicing"/>
    <property type="evidence" value="ECO:0007669"/>
    <property type="project" value="UniProtKB-UniRule"/>
</dbReference>
<dbReference type="GO" id="GO:0008033">
    <property type="term" value="P:tRNA processing"/>
    <property type="evidence" value="ECO:0007669"/>
    <property type="project" value="UniProtKB-KW"/>
</dbReference>
<dbReference type="HAMAP" id="MF_01390">
    <property type="entry name" value="MatK"/>
    <property type="match status" value="1"/>
</dbReference>
<dbReference type="InterPro" id="IPR024937">
    <property type="entry name" value="Domain_X"/>
</dbReference>
<dbReference type="InterPro" id="IPR002866">
    <property type="entry name" value="Maturase_MatK"/>
</dbReference>
<dbReference type="InterPro" id="IPR024942">
    <property type="entry name" value="Maturase_MatK_N"/>
</dbReference>
<dbReference type="PANTHER" id="PTHR34811">
    <property type="entry name" value="MATURASE K"/>
    <property type="match status" value="1"/>
</dbReference>
<dbReference type="PANTHER" id="PTHR34811:SF1">
    <property type="entry name" value="MATURASE K"/>
    <property type="match status" value="1"/>
</dbReference>
<dbReference type="Pfam" id="PF01348">
    <property type="entry name" value="Intron_maturas2"/>
    <property type="match status" value="1"/>
</dbReference>
<dbReference type="Pfam" id="PF01824">
    <property type="entry name" value="MatK_N"/>
    <property type="match status" value="1"/>
</dbReference>